<gene>
    <name evidence="3" type="primary">CXorf51B</name>
</gene>
<comment type="interaction">
    <interactant intactId="EBI-23685839">
        <id>P0DPH9</id>
    </interactant>
    <interactant intactId="EBI-297683">
        <id>Q96CW1</id>
        <label>AP2M1</label>
    </interactant>
    <organismsDiffer>false</organismsDiffer>
    <experiments>3</experiments>
</comment>
<proteinExistence type="evidence at protein level"/>
<evidence type="ECO:0000256" key="1">
    <source>
        <dbReference type="SAM" id="MobiDB-lite"/>
    </source>
</evidence>
<evidence type="ECO:0000305" key="2"/>
<evidence type="ECO:0000312" key="3">
    <source>
        <dbReference type="HGNC" id="HGNC:42787"/>
    </source>
</evidence>
<accession>P0DPH9</accession>
<sequence length="108" mass="12028">MAKVTSEPQKPNEDVDEQTPSTSSTKGRKKGKTPRQRRSRSGVKGLKTTRKAKRPLRGSSSQKAGETNTPAGKPKKARGPILRGRYHRLKEKMKKEEADKEQSETSVL</sequence>
<organism>
    <name type="scientific">Homo sapiens</name>
    <name type="common">Human</name>
    <dbReference type="NCBI Taxonomy" id="9606"/>
    <lineage>
        <taxon>Eukaryota</taxon>
        <taxon>Metazoa</taxon>
        <taxon>Chordata</taxon>
        <taxon>Craniata</taxon>
        <taxon>Vertebrata</taxon>
        <taxon>Euteleostomi</taxon>
        <taxon>Mammalia</taxon>
        <taxon>Eutheria</taxon>
        <taxon>Euarchontoglires</taxon>
        <taxon>Primates</taxon>
        <taxon>Haplorrhini</taxon>
        <taxon>Catarrhini</taxon>
        <taxon>Hominidae</taxon>
        <taxon>Homo</taxon>
    </lineage>
</organism>
<name>CX05B_HUMAN</name>
<keyword id="KW-1185">Reference proteome</keyword>
<feature type="chain" id="PRO_0000444694" description="Uncharacterized protein CXorf51B">
    <location>
        <begin position="1"/>
        <end position="108"/>
    </location>
</feature>
<feature type="region of interest" description="Disordered" evidence="1">
    <location>
        <begin position="1"/>
        <end position="108"/>
    </location>
</feature>
<feature type="compositionally biased region" description="Basic residues" evidence="1">
    <location>
        <begin position="26"/>
        <end position="56"/>
    </location>
</feature>
<feature type="compositionally biased region" description="Polar residues" evidence="1">
    <location>
        <begin position="58"/>
        <end position="70"/>
    </location>
</feature>
<feature type="compositionally biased region" description="Basic residues" evidence="1">
    <location>
        <begin position="73"/>
        <end position="92"/>
    </location>
</feature>
<feature type="compositionally biased region" description="Basic and acidic residues" evidence="1">
    <location>
        <begin position="93"/>
        <end position="108"/>
    </location>
</feature>
<protein>
    <recommendedName>
        <fullName evidence="2">Uncharacterized protein CXorf51B</fullName>
    </recommendedName>
</protein>
<dbReference type="EMBL" id="AL109836">
    <property type="status" value="NOT_ANNOTATED_CDS"/>
    <property type="molecule type" value="Genomic_DNA"/>
</dbReference>
<dbReference type="CCDS" id="CCDS83497.1"/>
<dbReference type="RefSeq" id="NP_001137536.1">
    <property type="nucleotide sequence ID" value="NM_001144064.2"/>
</dbReference>
<dbReference type="RefSeq" id="NP_001231821.1">
    <property type="nucleotide sequence ID" value="NM_001244892.2"/>
</dbReference>
<dbReference type="SMR" id="P0DPH9"/>
<dbReference type="IntAct" id="P0DPH9">
    <property type="interactions" value="1"/>
</dbReference>
<dbReference type="jPOST" id="P0DPH9"/>
<dbReference type="MassIVE" id="P0DPH9"/>
<dbReference type="PeptideAtlas" id="P0DPH9"/>
<dbReference type="DNASU" id="100129239"/>
<dbReference type="Ensembl" id="ENST00000438525.3">
    <property type="protein sequence ID" value="ENSP00000490294.1"/>
    <property type="gene ID" value="ENSG00000235699.3"/>
</dbReference>
<dbReference type="GeneID" id="100129239"/>
<dbReference type="GeneID" id="100133053"/>
<dbReference type="KEGG" id="hsa:100129239"/>
<dbReference type="KEGG" id="hsa:100133053"/>
<dbReference type="MANE-Select" id="ENST00000438525.3">
    <property type="protein sequence ID" value="ENSP00000490294.1"/>
    <property type="RefSeq nucleotide sequence ID" value="NM_001244892.2"/>
    <property type="RefSeq protein sequence ID" value="NP_001231821.1"/>
</dbReference>
<dbReference type="AGR" id="HGNC:30533"/>
<dbReference type="AGR" id="HGNC:42787"/>
<dbReference type="CTD" id="100129239"/>
<dbReference type="CTD" id="100133053"/>
<dbReference type="GeneCards" id="CXorf51B"/>
<dbReference type="HGNC" id="HGNC:42787">
    <property type="gene designation" value="CXorf51B"/>
</dbReference>
<dbReference type="HPA" id="ENSG00000235699">
    <property type="expression patterns" value="Tissue enriched (testis)"/>
</dbReference>
<dbReference type="neXtProt" id="NX_P0DPH9"/>
<dbReference type="OpenTargets" id="ENSG00000224440"/>
<dbReference type="OpenTargets" id="ENSG00000235699"/>
<dbReference type="VEuPathDB" id="HostDB:ENSG00000235699"/>
<dbReference type="GeneTree" id="ENSGT01130000278376"/>
<dbReference type="InParanoid" id="P0DPH9"/>
<dbReference type="OMA" id="KTPCQRR"/>
<dbReference type="OrthoDB" id="9538572at2759"/>
<dbReference type="PAN-GO" id="P0DPH9">
    <property type="GO annotations" value="0 GO annotations based on evolutionary models"/>
</dbReference>
<dbReference type="PathwayCommons" id="P0DPH9"/>
<dbReference type="Pharos" id="P0DPH9">
    <property type="development level" value="Tdark"/>
</dbReference>
<dbReference type="PRO" id="PR:P0DPH9"/>
<dbReference type="Proteomes" id="UP000005640">
    <property type="component" value="Chromosome X"/>
</dbReference>
<dbReference type="Bgee" id="ENSG00000235699">
    <property type="expression patterns" value="Expressed in left testis and 35 other cell types or tissues"/>
</dbReference>
<dbReference type="InterPro" id="IPR040433">
    <property type="entry name" value="Spermatid_TP"/>
</dbReference>
<dbReference type="PANTHER" id="PTHR37876">
    <property type="entry name" value="PROTEIN GAR2-LIKE"/>
    <property type="match status" value="1"/>
</dbReference>
<dbReference type="PANTHER" id="PTHR37876:SF1">
    <property type="entry name" value="SERINE_ARGININE REPETITIVE MATRIX PROTEIN 4-LIKE-RELATED"/>
    <property type="match status" value="1"/>
</dbReference>
<reference key="1">
    <citation type="journal article" date="2005" name="Nature">
        <title>The DNA sequence of the human X chromosome.</title>
        <authorList>
            <person name="Ross M.T."/>
            <person name="Grafham D.V."/>
            <person name="Coffey A.J."/>
            <person name="Scherer S."/>
            <person name="McLay K."/>
            <person name="Muzny D."/>
            <person name="Platzer M."/>
            <person name="Howell G.R."/>
            <person name="Burrows C."/>
            <person name="Bird C.P."/>
            <person name="Frankish A."/>
            <person name="Lovell F.L."/>
            <person name="Howe K.L."/>
            <person name="Ashurst J.L."/>
            <person name="Fulton R.S."/>
            <person name="Sudbrak R."/>
            <person name="Wen G."/>
            <person name="Jones M.C."/>
            <person name="Hurles M.E."/>
            <person name="Andrews T.D."/>
            <person name="Scott C.E."/>
            <person name="Searle S."/>
            <person name="Ramser J."/>
            <person name="Whittaker A."/>
            <person name="Deadman R."/>
            <person name="Carter N.P."/>
            <person name="Hunt S.E."/>
            <person name="Chen R."/>
            <person name="Cree A."/>
            <person name="Gunaratne P."/>
            <person name="Havlak P."/>
            <person name="Hodgson A."/>
            <person name="Metzker M.L."/>
            <person name="Richards S."/>
            <person name="Scott G."/>
            <person name="Steffen D."/>
            <person name="Sodergren E."/>
            <person name="Wheeler D.A."/>
            <person name="Worley K.C."/>
            <person name="Ainscough R."/>
            <person name="Ambrose K.D."/>
            <person name="Ansari-Lari M.A."/>
            <person name="Aradhya S."/>
            <person name="Ashwell R.I."/>
            <person name="Babbage A.K."/>
            <person name="Bagguley C.L."/>
            <person name="Ballabio A."/>
            <person name="Banerjee R."/>
            <person name="Barker G.E."/>
            <person name="Barlow K.F."/>
            <person name="Barrett I.P."/>
            <person name="Bates K.N."/>
            <person name="Beare D.M."/>
            <person name="Beasley H."/>
            <person name="Beasley O."/>
            <person name="Beck A."/>
            <person name="Bethel G."/>
            <person name="Blechschmidt K."/>
            <person name="Brady N."/>
            <person name="Bray-Allen S."/>
            <person name="Bridgeman A.M."/>
            <person name="Brown A.J."/>
            <person name="Brown M.J."/>
            <person name="Bonnin D."/>
            <person name="Bruford E.A."/>
            <person name="Buhay C."/>
            <person name="Burch P."/>
            <person name="Burford D."/>
            <person name="Burgess J."/>
            <person name="Burrill W."/>
            <person name="Burton J."/>
            <person name="Bye J.M."/>
            <person name="Carder C."/>
            <person name="Carrel L."/>
            <person name="Chako J."/>
            <person name="Chapman J.C."/>
            <person name="Chavez D."/>
            <person name="Chen E."/>
            <person name="Chen G."/>
            <person name="Chen Y."/>
            <person name="Chen Z."/>
            <person name="Chinault C."/>
            <person name="Ciccodicola A."/>
            <person name="Clark S.Y."/>
            <person name="Clarke G."/>
            <person name="Clee C.M."/>
            <person name="Clegg S."/>
            <person name="Clerc-Blankenburg K."/>
            <person name="Clifford K."/>
            <person name="Cobley V."/>
            <person name="Cole C.G."/>
            <person name="Conquer J.S."/>
            <person name="Corby N."/>
            <person name="Connor R.E."/>
            <person name="David R."/>
            <person name="Davies J."/>
            <person name="Davis C."/>
            <person name="Davis J."/>
            <person name="Delgado O."/>
            <person name="Deshazo D."/>
            <person name="Dhami P."/>
            <person name="Ding Y."/>
            <person name="Dinh H."/>
            <person name="Dodsworth S."/>
            <person name="Draper H."/>
            <person name="Dugan-Rocha S."/>
            <person name="Dunham A."/>
            <person name="Dunn M."/>
            <person name="Durbin K.J."/>
            <person name="Dutta I."/>
            <person name="Eades T."/>
            <person name="Ellwood M."/>
            <person name="Emery-Cohen A."/>
            <person name="Errington H."/>
            <person name="Evans K.L."/>
            <person name="Faulkner L."/>
            <person name="Francis F."/>
            <person name="Frankland J."/>
            <person name="Fraser A.E."/>
            <person name="Galgoczy P."/>
            <person name="Gilbert J."/>
            <person name="Gill R."/>
            <person name="Gloeckner G."/>
            <person name="Gregory S.G."/>
            <person name="Gribble S."/>
            <person name="Griffiths C."/>
            <person name="Grocock R."/>
            <person name="Gu Y."/>
            <person name="Gwilliam R."/>
            <person name="Hamilton C."/>
            <person name="Hart E.A."/>
            <person name="Hawes A."/>
            <person name="Heath P.D."/>
            <person name="Heitmann K."/>
            <person name="Hennig S."/>
            <person name="Hernandez J."/>
            <person name="Hinzmann B."/>
            <person name="Ho S."/>
            <person name="Hoffs M."/>
            <person name="Howden P.J."/>
            <person name="Huckle E.J."/>
            <person name="Hume J."/>
            <person name="Hunt P.J."/>
            <person name="Hunt A.R."/>
            <person name="Isherwood J."/>
            <person name="Jacob L."/>
            <person name="Johnson D."/>
            <person name="Jones S."/>
            <person name="de Jong P.J."/>
            <person name="Joseph S.S."/>
            <person name="Keenan S."/>
            <person name="Kelly S."/>
            <person name="Kershaw J.K."/>
            <person name="Khan Z."/>
            <person name="Kioschis P."/>
            <person name="Klages S."/>
            <person name="Knights A.J."/>
            <person name="Kosiura A."/>
            <person name="Kovar-Smith C."/>
            <person name="Laird G.K."/>
            <person name="Langford C."/>
            <person name="Lawlor S."/>
            <person name="Leversha M."/>
            <person name="Lewis L."/>
            <person name="Liu W."/>
            <person name="Lloyd C."/>
            <person name="Lloyd D.M."/>
            <person name="Loulseged H."/>
            <person name="Loveland J.E."/>
            <person name="Lovell J.D."/>
            <person name="Lozado R."/>
            <person name="Lu J."/>
            <person name="Lyne R."/>
            <person name="Ma J."/>
            <person name="Maheshwari M."/>
            <person name="Matthews L.H."/>
            <person name="McDowall J."/>
            <person name="McLaren S."/>
            <person name="McMurray A."/>
            <person name="Meidl P."/>
            <person name="Meitinger T."/>
            <person name="Milne S."/>
            <person name="Miner G."/>
            <person name="Mistry S.L."/>
            <person name="Morgan M."/>
            <person name="Morris S."/>
            <person name="Mueller I."/>
            <person name="Mullikin J.C."/>
            <person name="Nguyen N."/>
            <person name="Nordsiek G."/>
            <person name="Nyakatura G."/>
            <person name="O'dell C.N."/>
            <person name="Okwuonu G."/>
            <person name="Palmer S."/>
            <person name="Pandian R."/>
            <person name="Parker D."/>
            <person name="Parrish J."/>
            <person name="Pasternak S."/>
            <person name="Patel D."/>
            <person name="Pearce A.V."/>
            <person name="Pearson D.M."/>
            <person name="Pelan S.E."/>
            <person name="Perez L."/>
            <person name="Porter K.M."/>
            <person name="Ramsey Y."/>
            <person name="Reichwald K."/>
            <person name="Rhodes S."/>
            <person name="Ridler K.A."/>
            <person name="Schlessinger D."/>
            <person name="Schueler M.G."/>
            <person name="Sehra H.K."/>
            <person name="Shaw-Smith C."/>
            <person name="Shen H."/>
            <person name="Sheridan E.M."/>
            <person name="Shownkeen R."/>
            <person name="Skuce C.D."/>
            <person name="Smith M.L."/>
            <person name="Sotheran E.C."/>
            <person name="Steingruber H.E."/>
            <person name="Steward C.A."/>
            <person name="Storey R."/>
            <person name="Swann R.M."/>
            <person name="Swarbreck D."/>
            <person name="Tabor P.E."/>
            <person name="Taudien S."/>
            <person name="Taylor T."/>
            <person name="Teague B."/>
            <person name="Thomas K."/>
            <person name="Thorpe A."/>
            <person name="Timms K."/>
            <person name="Tracey A."/>
            <person name="Trevanion S."/>
            <person name="Tromans A.C."/>
            <person name="d'Urso M."/>
            <person name="Verduzco D."/>
            <person name="Villasana D."/>
            <person name="Waldron L."/>
            <person name="Wall M."/>
            <person name="Wang Q."/>
            <person name="Warren J."/>
            <person name="Warry G.L."/>
            <person name="Wei X."/>
            <person name="West A."/>
            <person name="Whitehead S.L."/>
            <person name="Whiteley M.N."/>
            <person name="Wilkinson J.E."/>
            <person name="Willey D.L."/>
            <person name="Williams G."/>
            <person name="Williams L."/>
            <person name="Williamson A."/>
            <person name="Williamson H."/>
            <person name="Wilming L."/>
            <person name="Woodmansey R.L."/>
            <person name="Wray P.W."/>
            <person name="Yen J."/>
            <person name="Zhang J."/>
            <person name="Zhou J."/>
            <person name="Zoghbi H."/>
            <person name="Zorilla S."/>
            <person name="Buck D."/>
            <person name="Reinhardt R."/>
            <person name="Poustka A."/>
            <person name="Rosenthal A."/>
            <person name="Lehrach H."/>
            <person name="Meindl A."/>
            <person name="Minx P.J."/>
            <person name="Hillier L.W."/>
            <person name="Willard H.F."/>
            <person name="Wilson R.K."/>
            <person name="Waterston R.H."/>
            <person name="Rice C.M."/>
            <person name="Vaudin M."/>
            <person name="Coulson A."/>
            <person name="Nelson D.L."/>
            <person name="Weinstock G."/>
            <person name="Sulston J.E."/>
            <person name="Durbin R.M."/>
            <person name="Hubbard T."/>
            <person name="Gibbs R.A."/>
            <person name="Beck S."/>
            <person name="Rogers J."/>
            <person name="Bentley D.R."/>
        </authorList>
    </citation>
    <scope>NUCLEOTIDE SEQUENCE [LARGE SCALE GENOMIC DNA]</scope>
</reference>